<dbReference type="EC" id="2.4.99.23" evidence="2 3 12"/>
<dbReference type="EMBL" id="M95398">
    <property type="status" value="NOT_ANNOTATED_CDS"/>
    <property type="molecule type" value="Genomic_DNA"/>
</dbReference>
<dbReference type="EMBL" id="X62530">
    <property type="protein sequence ID" value="CAA44391.1"/>
    <property type="molecule type" value="Genomic_DNA"/>
</dbReference>
<dbReference type="EMBL" id="U00039">
    <property type="protein sequence ID" value="AAB18598.1"/>
    <property type="molecule type" value="Genomic_DNA"/>
</dbReference>
<dbReference type="EMBL" id="U00096">
    <property type="protein sequence ID" value="AAC76645.1"/>
    <property type="molecule type" value="Genomic_DNA"/>
</dbReference>
<dbReference type="EMBL" id="AP009048">
    <property type="protein sequence ID" value="BAE77671.1"/>
    <property type="molecule type" value="Genomic_DNA"/>
</dbReference>
<dbReference type="PIR" id="A40619">
    <property type="entry name" value="A40619"/>
</dbReference>
<dbReference type="RefSeq" id="NP_418078.1">
    <property type="nucleotide sequence ID" value="NC_000913.3"/>
</dbReference>
<dbReference type="RefSeq" id="WP_001264584.1">
    <property type="nucleotide sequence ID" value="NZ_LN832404.1"/>
</dbReference>
<dbReference type="SMR" id="P24173"/>
<dbReference type="BioGRID" id="4263304">
    <property type="interactions" value="516"/>
</dbReference>
<dbReference type="FunCoup" id="P24173">
    <property type="interactions" value="394"/>
</dbReference>
<dbReference type="IntAct" id="P24173">
    <property type="interactions" value="17"/>
</dbReference>
<dbReference type="STRING" id="511145.b3621"/>
<dbReference type="BindingDB" id="P24173"/>
<dbReference type="ChEMBL" id="CHEMBL4295576"/>
<dbReference type="CAZy" id="GT9">
    <property type="family name" value="Glycosyltransferase Family 9"/>
</dbReference>
<dbReference type="jPOST" id="P24173"/>
<dbReference type="PaxDb" id="511145-b3621"/>
<dbReference type="EnsemblBacteria" id="AAC76645">
    <property type="protein sequence ID" value="AAC76645"/>
    <property type="gene ID" value="b3621"/>
</dbReference>
<dbReference type="GeneID" id="948136"/>
<dbReference type="KEGG" id="ecj:JW3596"/>
<dbReference type="KEGG" id="eco:b3621"/>
<dbReference type="KEGG" id="ecoc:C3026_19630"/>
<dbReference type="PATRIC" id="fig|1411691.4.peg.3085"/>
<dbReference type="EchoBASE" id="EB1175"/>
<dbReference type="eggNOG" id="COG0859">
    <property type="taxonomic scope" value="Bacteria"/>
</dbReference>
<dbReference type="HOGENOM" id="CLU_038371_6_0_6"/>
<dbReference type="InParanoid" id="P24173"/>
<dbReference type="OMA" id="ITHLAWA"/>
<dbReference type="OrthoDB" id="9767552at2"/>
<dbReference type="PhylomeDB" id="P24173"/>
<dbReference type="BioCyc" id="EcoCyc:EG11189-MONOMER"/>
<dbReference type="BioCyc" id="MetaCyc:EG11189-MONOMER"/>
<dbReference type="BRENDA" id="2.4.99.B6">
    <property type="organism ID" value="2026"/>
</dbReference>
<dbReference type="UniPathway" id="UPA00958"/>
<dbReference type="EvolutionaryTrace" id="P24173"/>
<dbReference type="PRO" id="PR:P24173"/>
<dbReference type="Proteomes" id="UP000000625">
    <property type="component" value="Chromosome"/>
</dbReference>
<dbReference type="GO" id="GO:0005829">
    <property type="term" value="C:cytosol"/>
    <property type="evidence" value="ECO:0000318"/>
    <property type="project" value="GO_Central"/>
</dbReference>
<dbReference type="GO" id="GO:0005886">
    <property type="term" value="C:plasma membrane"/>
    <property type="evidence" value="ECO:0007669"/>
    <property type="project" value="UniProtKB-SubCell"/>
</dbReference>
<dbReference type="GO" id="GO:0008713">
    <property type="term" value="F:ADP-heptose-lipopolysaccharide heptosyltransferase activity"/>
    <property type="evidence" value="ECO:0000318"/>
    <property type="project" value="GO_Central"/>
</dbReference>
<dbReference type="GO" id="GO:0008920">
    <property type="term" value="F:lipopolysaccharide heptosyltransferase activity"/>
    <property type="evidence" value="ECO:0000314"/>
    <property type="project" value="CACAO"/>
</dbReference>
<dbReference type="GO" id="GO:0009244">
    <property type="term" value="P:lipopolysaccharide core region biosynthetic process"/>
    <property type="evidence" value="ECO:0000315"/>
    <property type="project" value="CACAO"/>
</dbReference>
<dbReference type="CDD" id="cd03789">
    <property type="entry name" value="GT9_LPS_heptosyltransferase"/>
    <property type="match status" value="1"/>
</dbReference>
<dbReference type="FunFam" id="3.40.50.2000:FF:000106">
    <property type="entry name" value="Lipopolysaccharide heptosyltransferase 1"/>
    <property type="match status" value="1"/>
</dbReference>
<dbReference type="FunFam" id="3.40.50.2000:FF:000075">
    <property type="entry name" value="Lipopolysaccharide heptosyltransferase I"/>
    <property type="match status" value="1"/>
</dbReference>
<dbReference type="Gene3D" id="3.40.50.2000">
    <property type="entry name" value="Glycogen Phosphorylase B"/>
    <property type="match status" value="2"/>
</dbReference>
<dbReference type="InterPro" id="IPR002201">
    <property type="entry name" value="Glyco_trans_9"/>
</dbReference>
<dbReference type="InterPro" id="IPR011908">
    <property type="entry name" value="LipoPS_heptosylTferase-I"/>
</dbReference>
<dbReference type="InterPro" id="IPR051199">
    <property type="entry name" value="LPS_LOS_Heptosyltrfase"/>
</dbReference>
<dbReference type="NCBIfam" id="TIGR02193">
    <property type="entry name" value="heptsyl_trn_I"/>
    <property type="match status" value="1"/>
</dbReference>
<dbReference type="NCBIfam" id="NF008204">
    <property type="entry name" value="PRK10964.1"/>
    <property type="match status" value="1"/>
</dbReference>
<dbReference type="PANTHER" id="PTHR30160:SF19">
    <property type="entry name" value="LIPOPOLYSACCHARIDE HEPTOSYLTRANSFERASE 1"/>
    <property type="match status" value="1"/>
</dbReference>
<dbReference type="PANTHER" id="PTHR30160">
    <property type="entry name" value="TETRAACYLDISACCHARIDE 4'-KINASE-RELATED"/>
    <property type="match status" value="1"/>
</dbReference>
<dbReference type="Pfam" id="PF01075">
    <property type="entry name" value="Glyco_transf_9"/>
    <property type="match status" value="1"/>
</dbReference>
<dbReference type="SUPFAM" id="SSF53756">
    <property type="entry name" value="UDP-Glycosyltransferase/glycogen phosphorylase"/>
    <property type="match status" value="1"/>
</dbReference>
<feature type="chain" id="PRO_0000207260" description="Lipopolysaccharide heptosyltransferase 1">
    <location>
        <begin position="1"/>
        <end position="319"/>
    </location>
</feature>
<feature type="binding site" evidence="1">
    <location>
        <position position="187"/>
    </location>
    <ligand>
        <name>ADP-L-glycero-beta-D-manno-heptose</name>
        <dbReference type="ChEBI" id="CHEBI:61506"/>
    </ligand>
</feature>
<feature type="binding site" evidence="1">
    <location>
        <position position="188"/>
    </location>
    <ligand>
        <name>ADP-L-glycero-beta-D-manno-heptose</name>
        <dbReference type="ChEBI" id="CHEBI:61506"/>
    </ligand>
</feature>
<feature type="binding site" evidence="1">
    <location>
        <position position="192"/>
    </location>
    <ligand>
        <name>ADP-L-glycero-beta-D-manno-heptose</name>
        <dbReference type="ChEBI" id="CHEBI:61506"/>
    </ligand>
</feature>
<feature type="binding site" evidence="1">
    <location>
        <position position="222"/>
    </location>
    <ligand>
        <name>ADP-L-glycero-beta-D-manno-heptose</name>
        <dbReference type="ChEBI" id="CHEBI:61506"/>
    </ligand>
</feature>
<feature type="binding site" evidence="1">
    <location>
        <position position="242"/>
    </location>
    <ligand>
        <name>ADP-L-glycero-beta-D-manno-heptose</name>
        <dbReference type="ChEBI" id="CHEBI:61506"/>
    </ligand>
</feature>
<feature type="binding site" evidence="1">
    <location>
        <position position="261"/>
    </location>
    <ligand>
        <name>ADP-L-glycero-beta-D-manno-heptose</name>
        <dbReference type="ChEBI" id="CHEBI:61506"/>
    </ligand>
</feature>
<feature type="binding site" evidence="1">
    <location>
        <position position="262"/>
    </location>
    <ligand>
        <name>ADP-L-glycero-beta-D-manno-heptose</name>
        <dbReference type="ChEBI" id="CHEBI:61506"/>
    </ligand>
</feature>
<feature type="binding site" evidence="1">
    <location>
        <position position="263"/>
    </location>
    <ligand>
        <name>ADP-L-glycero-beta-D-manno-heptose</name>
        <dbReference type="ChEBI" id="CHEBI:61506"/>
    </ligand>
</feature>
<feature type="binding site" evidence="1">
    <location>
        <position position="266"/>
    </location>
    <ligand>
        <name>ADP-L-glycero-beta-D-manno-heptose</name>
        <dbReference type="ChEBI" id="CHEBI:61506"/>
    </ligand>
</feature>
<name>WAAC_ECOLI</name>
<sequence>MRVLIVKTSSMGDVLHTLPALTDAQQAIPGIKFDWVVEEGFAQIPSWHAAVERVIPVAIRRWRKAWFSAPIKAERKAFREALQAENYDAVIDAQGLVKSAALVTRLAHGVKHGMDWQTAREPLASLFYNRKHHIAKQQHAVERTRELFAKSLGYSKPQTQGDYAIAQHFLTNLPTDAGEYAVFLHATTRDDKHWPEEHWRELIGLLADSGIRIKLPWGAPHEEERAKRLAEGFAYVEVLPKMSLEGVARVLAGAKFVVSVDTGLSHLTAALDRPNITVYGPTDPGLIGGYGKNQMVCRAPRENLINLNSQAVLEKLSSL</sequence>
<reference key="1">
    <citation type="journal article" date="1993" name="J. Bacteriol.">
        <title>Cloning and characterization of the Escherichia coli K-12 rfa-2 (rfaC) gene, a gene required for lipopolysaccharide inner core synthesis.</title>
        <authorList>
            <person name="Chen L."/>
            <person name="Coleman W.G. Jr."/>
        </authorList>
    </citation>
    <scope>NUCLEOTIDE SEQUENCE [GENOMIC DNA]</scope>
    <scope>PROTEIN SEQUENCE OF 1-24</scope>
    <scope>DISRUPTION PHENOTYPE</scope>
    <scope>PATHWAY</scope>
    <source>
        <strain>K12</strain>
    </source>
</reference>
<reference key="2">
    <citation type="journal article" date="1994" name="Nucleic Acids Res.">
        <title>Analysis of the Escherichia coli genome. V. DNA sequence of the region from 76.0 to 81.5 minutes.</title>
        <authorList>
            <person name="Sofia H.J."/>
            <person name="Burland V."/>
            <person name="Daniels D.L."/>
            <person name="Plunkett G. III"/>
            <person name="Blattner F.R."/>
        </authorList>
    </citation>
    <scope>NUCLEOTIDE SEQUENCE [LARGE SCALE GENOMIC DNA]</scope>
    <source>
        <strain>K12 / MG1655 / ATCC 47076</strain>
    </source>
</reference>
<reference key="3">
    <citation type="journal article" date="1997" name="Science">
        <title>The complete genome sequence of Escherichia coli K-12.</title>
        <authorList>
            <person name="Blattner F.R."/>
            <person name="Plunkett G. III"/>
            <person name="Bloch C.A."/>
            <person name="Perna N.T."/>
            <person name="Burland V."/>
            <person name="Riley M."/>
            <person name="Collado-Vides J."/>
            <person name="Glasner J.D."/>
            <person name="Rode C.K."/>
            <person name="Mayhew G.F."/>
            <person name="Gregor J."/>
            <person name="Davis N.W."/>
            <person name="Kirkpatrick H.A."/>
            <person name="Goeden M.A."/>
            <person name="Rose D.J."/>
            <person name="Mau B."/>
            <person name="Shao Y."/>
        </authorList>
    </citation>
    <scope>NUCLEOTIDE SEQUENCE [LARGE SCALE GENOMIC DNA]</scope>
    <source>
        <strain>K12 / MG1655 / ATCC 47076</strain>
    </source>
</reference>
<reference key="4">
    <citation type="journal article" date="2006" name="Mol. Syst. Biol.">
        <title>Highly accurate genome sequences of Escherichia coli K-12 strains MG1655 and W3110.</title>
        <authorList>
            <person name="Hayashi K."/>
            <person name="Morooka N."/>
            <person name="Yamamoto Y."/>
            <person name="Fujita K."/>
            <person name="Isono K."/>
            <person name="Choi S."/>
            <person name="Ohtsubo E."/>
            <person name="Baba T."/>
            <person name="Wanner B.L."/>
            <person name="Mori H."/>
            <person name="Horiuchi T."/>
        </authorList>
    </citation>
    <scope>NUCLEOTIDE SEQUENCE [LARGE SCALE GENOMIC DNA]</scope>
    <source>
        <strain>K12 / W3110 / ATCC 27325 / DSM 5911</strain>
    </source>
</reference>
<reference key="5">
    <citation type="journal article" date="1992" name="J. Bacteriol.">
        <title>Comparison of lipopolysaccharide biosynthesis genes rfaK, rfaL, rfaY, and rfaZ of Escherichia coli K-12 and Salmonella typhimurium.</title>
        <authorList>
            <person name="Klena J.D."/>
            <person name="Pradel E."/>
            <person name="Schnaitman C.A."/>
        </authorList>
    </citation>
    <scope>NUCLEOTIDE SEQUENCE [GENOMIC DNA] OF 264-319</scope>
    <source>
        <strain>K12</strain>
    </source>
</reference>
<reference key="6">
    <citation type="journal article" date="1998" name="J. Biol. Chem.">
        <title>Enzymatic synthesis of lipopolysaccharide in Escherichia coli. Purification and properties of heptosyltransferase i.</title>
        <authorList>
            <person name="Kadrmas J.L."/>
            <person name="Raetz C.R."/>
        </authorList>
    </citation>
    <scope>PROTEIN SEQUENCE OF 1-15</scope>
    <scope>FUNCTION</scope>
    <scope>BIOPHYSICOCHEMICAL PROPERTIES</scope>
    <scope>SUBCELLULAR LOCATION</scope>
</reference>
<reference key="7">
    <citation type="journal article" date="1996" name="Trends Microbiol.">
        <title>Bacterial polysaccharide synthesis and gene nomenclature.</title>
        <authorList>
            <person name="Reeves P.R."/>
            <person name="Hobbs M."/>
            <person name="Valvano M.A."/>
            <person name="Skurnik M."/>
            <person name="Whitfield C."/>
            <person name="Coplin D."/>
            <person name="Kido N."/>
            <person name="Klena J."/>
            <person name="Maskell D."/>
            <person name="Raetz C.R.H."/>
            <person name="Rick P.D."/>
        </authorList>
    </citation>
    <scope>NOMENCLATURE</scope>
</reference>
<reference key="8">
    <citation type="journal article" date="2000" name="Eur. J. Biochem.">
        <title>Comparative functional characterization in vitro of heptosyltransferase I (WaaC) and II (WaaF) from Escherichia coli.</title>
        <authorList>
            <person name="Gronow S."/>
            <person name="Brabetz W."/>
            <person name="Brade H."/>
        </authorList>
    </citation>
    <scope>FUNCTION</scope>
    <scope>CATALYTIC ACTIVITY</scope>
    <scope>BIOPHYSICOCHEMICAL PROPERTIES</scope>
    <scope>PATHWAY</scope>
    <source>
        <strain>K12</strain>
    </source>
</reference>
<reference key="9">
    <citation type="journal article" date="2001" name="J. Endotoxin Res.">
        <title>Characterization of the physiological substrate for lipopolysaccharide heptosyltransferases I and II.</title>
        <authorList>
            <person name="Gronow S."/>
            <person name="Oertelt C."/>
            <person name="Ervelae E."/>
            <person name="Zamyatina A."/>
            <person name="Kosma P."/>
            <person name="Skurnik M."/>
            <person name="Holst O."/>
        </authorList>
    </citation>
    <scope>FUNCTION</scope>
    <scope>CATALYTIC ACTIVITY</scope>
</reference>
<reference key="10">
    <citation type="journal article" date="2016" name="J. Basic Microbiol.">
        <title>Deletion of the genes waaC, waaF, or waaG in Escherichia coli W3110 disables the flagella biosynthesis.</title>
        <authorList>
            <person name="Wang Z."/>
            <person name="Wang J."/>
            <person name="Ren G."/>
            <person name="Li Y."/>
            <person name="Wang X."/>
        </authorList>
    </citation>
    <scope>DISRUPTION PHENOTYPE</scope>
    <source>
        <strain>K12 / W3110 / ATCC 27325 / DSM 5911</strain>
    </source>
</reference>
<evidence type="ECO:0000250" key="1">
    <source>
        <dbReference type="UniProtKB" id="P0DX54"/>
    </source>
</evidence>
<evidence type="ECO:0000269" key="2">
    <source>
    </source>
</evidence>
<evidence type="ECO:0000269" key="3">
    <source>
    </source>
</evidence>
<evidence type="ECO:0000269" key="4">
    <source>
    </source>
</evidence>
<evidence type="ECO:0000269" key="5">
    <source>
    </source>
</evidence>
<evidence type="ECO:0000269" key="6">
    <source>
    </source>
</evidence>
<evidence type="ECO:0000303" key="7">
    <source>
    </source>
</evidence>
<evidence type="ECO:0000303" key="8">
    <source>
    </source>
</evidence>
<evidence type="ECO:0000303" key="9">
    <source>
    </source>
</evidence>
<evidence type="ECO:0000303" key="10">
    <source>
    </source>
</evidence>
<evidence type="ECO:0000305" key="11"/>
<evidence type="ECO:0000305" key="12">
    <source>
    </source>
</evidence>
<organism>
    <name type="scientific">Escherichia coli (strain K12)</name>
    <dbReference type="NCBI Taxonomy" id="83333"/>
    <lineage>
        <taxon>Bacteria</taxon>
        <taxon>Pseudomonadati</taxon>
        <taxon>Pseudomonadota</taxon>
        <taxon>Gammaproteobacteria</taxon>
        <taxon>Enterobacterales</taxon>
        <taxon>Enterobacteriaceae</taxon>
        <taxon>Escherichia</taxon>
    </lineage>
</organism>
<accession>P24173</accession>
<accession>P27376</accession>
<accession>Q2M7T5</accession>
<gene>
    <name evidence="9" type="primary">waaC</name>
    <name evidence="8" type="synonym">rfa-2</name>
    <name evidence="7" type="synonym">rfaC</name>
    <name type="synonym">yibC</name>
    <name type="ordered locus">b3621</name>
    <name type="ordered locus">JW3596</name>
</gene>
<proteinExistence type="evidence at protein level"/>
<keyword id="KW-0997">Cell inner membrane</keyword>
<keyword id="KW-1003">Cell membrane</keyword>
<keyword id="KW-0903">Direct protein sequencing</keyword>
<keyword id="KW-0328">Glycosyltransferase</keyword>
<keyword id="KW-0448">Lipopolysaccharide biosynthesis</keyword>
<keyword id="KW-0472">Membrane</keyword>
<keyword id="KW-1185">Reference proteome</keyword>
<keyword id="KW-0808">Transferase</keyword>
<protein>
    <recommendedName>
        <fullName evidence="11">Lipopolysaccharide heptosyltransferase 1</fullName>
        <ecNumber evidence="2 3 12">2.4.99.23</ecNumber>
    </recommendedName>
    <alternativeName>
        <fullName evidence="11">ADP-heptose:lipopolysaccharide heptosyltransferase I</fullName>
        <shortName evidence="11">ADP-heptose:LPS heptosyltransferase I</shortName>
        <shortName evidence="10">Heptosyltransferase I</shortName>
    </alternativeName>
</protein>
<comment type="function">
    <text evidence="2 3 6">Glycosyltransferase involved in the biosynthesis of the core oligosaccharide region of lipopolysaccharide (LPS) (PubMed:11054112, PubMed:9446588). Catalyzes the addition of the first heptose unit to one 3-deoxy-D-manno-octulosonic acid (Kdo) residue of the Kdo2-lipid A module (PubMed:11054112, PubMed:11717579, PubMed:9446588). The analog ADP-mannose can serve as an alternative donor in place of ADP-L-glycero-D-manno-heptose for the glycosylation of Kdo2-lipid A (PubMed:9446588). Displays no activity with ADP-glucose, GDP-mannose, UDP-glucose or UDP-galactose (PubMed:9446588).</text>
</comment>
<comment type="catalytic activity">
    <reaction evidence="2 3 12">
        <text>an alpha-Kdo-(2-&gt;4)-alpha-Kdo-(2-&gt;6)-lipid A + ADP-L-glycero-beta-D-manno-heptose = an L-alpha-D-Hep-(1-&gt;5)-[alpha-Kdo-(2-&gt;4)]-alpha-Kdo-(2-&gt;6)-lipid A + ADP + H(+)</text>
        <dbReference type="Rhea" id="RHEA:74067"/>
        <dbReference type="ChEBI" id="CHEBI:15378"/>
        <dbReference type="ChEBI" id="CHEBI:61506"/>
        <dbReference type="ChEBI" id="CHEBI:176431"/>
        <dbReference type="ChEBI" id="CHEBI:193068"/>
        <dbReference type="ChEBI" id="CHEBI:456216"/>
        <dbReference type="EC" id="2.4.99.23"/>
    </reaction>
</comment>
<comment type="catalytic activity">
    <reaction evidence="2 3 12">
        <text>alpha-Kdo-(2-&gt;4)-alpha-Kdo-(2-&gt;6)-lipid A (E. coli) + ADP-L-glycero-beta-D-manno-heptose = L-alpha-D-Hep-(1-&gt;5)-[alpha-Kdo-(2-&gt;4)]-alpha-Kdo-(2-&gt;6)-lipid A (E. coli) + ADP + H(+)</text>
        <dbReference type="Rhea" id="RHEA:28402"/>
        <dbReference type="ChEBI" id="CHEBI:15378"/>
        <dbReference type="ChEBI" id="CHEBI:58540"/>
        <dbReference type="ChEBI" id="CHEBI:61502"/>
        <dbReference type="ChEBI" id="CHEBI:61506"/>
        <dbReference type="ChEBI" id="CHEBI:456216"/>
        <dbReference type="EC" id="2.4.99.23"/>
    </reaction>
</comment>
<comment type="biophysicochemical properties">
    <kinetics>
        <KM evidence="6">1.47 mM for ADP-mannose</KM>
        <KM evidence="6">4.5 uM for Kdo2-lipid A</KM>
        <Vmax evidence="6">3000.0 nmol/min/mg enzyme with ADP-mannose as a donor</Vmax>
    </kinetics>
    <phDependence>
        <text evidence="2 6">Optimum pH is 7.5 (PubMed:9446588). Active between pH 7.5 and 8.5 (PubMed:11054112).</text>
    </phDependence>
</comment>
<comment type="pathway">
    <text evidence="2 5">Bacterial outer membrane biogenesis; LPS core biosynthesis.</text>
</comment>
<comment type="subcellular location">
    <subcellularLocation>
        <location evidence="6">Cell inner membrane</location>
        <topology evidence="6">Peripheral membrane protein</topology>
        <orientation evidence="12">Cytoplasmic side</orientation>
    </subcellularLocation>
</comment>
<comment type="disruption phenotype">
    <text evidence="4 5">Disruption of the gene affects LPS biosynthesis (PubMed:8478319). Deletion mutant synthesizes shorter LPS without the outer-core oligosaccharide and cannot produce flagella, demonstrating that flagella assembly in E.coli depends on the length of LPS (PubMed:27214006).</text>
</comment>
<comment type="similarity">
    <text evidence="11">Belongs to the glycosyltransferase 9 family.</text>
</comment>